<feature type="chain" id="PRO_0000331124" description="Insulin-degrading enzyme homolog">
    <location>
        <begin position="1"/>
        <end position="962"/>
    </location>
</feature>
<feature type="region of interest" description="Disordered" evidence="3">
    <location>
        <begin position="1"/>
        <end position="21"/>
    </location>
</feature>
<feature type="compositionally biased region" description="Low complexity" evidence="3">
    <location>
        <begin position="1"/>
        <end position="10"/>
    </location>
</feature>
<feature type="active site" description="Proton acceptor" evidence="2">
    <location>
        <position position="77"/>
    </location>
</feature>
<feature type="binding site" evidence="2">
    <location>
        <position position="74"/>
    </location>
    <ligand>
        <name>Zn(2+)</name>
        <dbReference type="ChEBI" id="CHEBI:29105"/>
    </ligand>
</feature>
<feature type="binding site" evidence="2">
    <location>
        <position position="78"/>
    </location>
    <ligand>
        <name>Zn(2+)</name>
        <dbReference type="ChEBI" id="CHEBI:29105"/>
    </ligand>
</feature>
<feature type="binding site" evidence="2">
    <location>
        <position position="155"/>
    </location>
    <ligand>
        <name>Zn(2+)</name>
        <dbReference type="ChEBI" id="CHEBI:29105"/>
    </ligand>
</feature>
<protein>
    <recommendedName>
        <fullName>Insulin-degrading enzyme homolog</fullName>
        <ecNumber>3.4.24.-</ecNumber>
    </recommendedName>
    <alternativeName>
        <fullName>Insulin protease homolog</fullName>
        <shortName>Insulinase homolog</shortName>
    </alternativeName>
    <alternativeName>
        <fullName>Insulysin homolog</fullName>
    </alternativeName>
</protein>
<evidence type="ECO:0000250" key="1"/>
<evidence type="ECO:0000255" key="2">
    <source>
        <dbReference type="PROSITE-ProRule" id="PRU10096"/>
    </source>
</evidence>
<evidence type="ECO:0000256" key="3">
    <source>
        <dbReference type="SAM" id="MobiDB-lite"/>
    </source>
</evidence>
<evidence type="ECO:0000305" key="4"/>
<dbReference type="EC" id="3.4.24.-"/>
<dbReference type="EMBL" id="AAFI02000104">
    <property type="protein sequence ID" value="EAL63572.1"/>
    <property type="molecule type" value="Genomic_DNA"/>
</dbReference>
<dbReference type="RefSeq" id="XP_637100.1">
    <property type="nucleotide sequence ID" value="XM_632008.1"/>
</dbReference>
<dbReference type="SMR" id="Q54JQ2"/>
<dbReference type="FunCoup" id="Q54JQ2">
    <property type="interactions" value="1129"/>
</dbReference>
<dbReference type="STRING" id="44689.Q54JQ2"/>
<dbReference type="MEROPS" id="M16.A14"/>
<dbReference type="PaxDb" id="44689-DDB0187681"/>
<dbReference type="EnsemblProtists" id="EAL63572">
    <property type="protein sequence ID" value="EAL63572"/>
    <property type="gene ID" value="DDB_G0287851"/>
</dbReference>
<dbReference type="GeneID" id="8626354"/>
<dbReference type="KEGG" id="ddi:DDB_G0287851"/>
<dbReference type="dictyBase" id="DDB_G0287851"/>
<dbReference type="VEuPathDB" id="AmoebaDB:DDB_G0287851"/>
<dbReference type="eggNOG" id="KOG0959">
    <property type="taxonomic scope" value="Eukaryota"/>
</dbReference>
<dbReference type="HOGENOM" id="CLU_004639_1_1_1"/>
<dbReference type="InParanoid" id="Q54JQ2"/>
<dbReference type="OMA" id="VEPWYCT"/>
<dbReference type="PhylomeDB" id="Q54JQ2"/>
<dbReference type="Reactome" id="R-DDI-9033241">
    <property type="pathway name" value="Peroxisomal protein import"/>
</dbReference>
<dbReference type="PRO" id="PR:Q54JQ2"/>
<dbReference type="Proteomes" id="UP000002195">
    <property type="component" value="Chromosome 5"/>
</dbReference>
<dbReference type="GO" id="GO:0005829">
    <property type="term" value="C:cytosol"/>
    <property type="evidence" value="ECO:0000318"/>
    <property type="project" value="GO_Central"/>
</dbReference>
<dbReference type="GO" id="GO:0005739">
    <property type="term" value="C:mitochondrion"/>
    <property type="evidence" value="ECO:0000318"/>
    <property type="project" value="GO_Central"/>
</dbReference>
<dbReference type="GO" id="GO:0046872">
    <property type="term" value="F:metal ion binding"/>
    <property type="evidence" value="ECO:0007669"/>
    <property type="project" value="UniProtKB-KW"/>
</dbReference>
<dbReference type="GO" id="GO:0004222">
    <property type="term" value="F:metalloendopeptidase activity"/>
    <property type="evidence" value="ECO:0000318"/>
    <property type="project" value="GO_Central"/>
</dbReference>
<dbReference type="GO" id="GO:0043171">
    <property type="term" value="P:peptide catabolic process"/>
    <property type="evidence" value="ECO:0000318"/>
    <property type="project" value="GO_Central"/>
</dbReference>
<dbReference type="GO" id="GO:0051603">
    <property type="term" value="P:proteolysis involved in protein catabolic process"/>
    <property type="evidence" value="ECO:0000318"/>
    <property type="project" value="GO_Central"/>
</dbReference>
<dbReference type="FunFam" id="3.30.830.10:FF:000012">
    <property type="entry name" value="Protease 3"/>
    <property type="match status" value="1"/>
</dbReference>
<dbReference type="Gene3D" id="3.30.830.10">
    <property type="entry name" value="Metalloenzyme, LuxS/M16 peptidase-like"/>
    <property type="match status" value="4"/>
</dbReference>
<dbReference type="InterPro" id="IPR011249">
    <property type="entry name" value="Metalloenz_LuxS/M16"/>
</dbReference>
<dbReference type="InterPro" id="IPR011765">
    <property type="entry name" value="Pept_M16_N"/>
</dbReference>
<dbReference type="InterPro" id="IPR001431">
    <property type="entry name" value="Pept_M16_Zn_BS"/>
</dbReference>
<dbReference type="InterPro" id="IPR050626">
    <property type="entry name" value="Peptidase_M16"/>
</dbReference>
<dbReference type="InterPro" id="IPR007863">
    <property type="entry name" value="Peptidase_M16_C"/>
</dbReference>
<dbReference type="InterPro" id="IPR032632">
    <property type="entry name" value="Peptidase_M16_M"/>
</dbReference>
<dbReference type="InterPro" id="IPR054734">
    <property type="entry name" value="PqqF-like_C_4"/>
</dbReference>
<dbReference type="PANTHER" id="PTHR43690:SF18">
    <property type="entry name" value="INSULIN-DEGRADING ENZYME-RELATED"/>
    <property type="match status" value="1"/>
</dbReference>
<dbReference type="PANTHER" id="PTHR43690">
    <property type="entry name" value="NARDILYSIN"/>
    <property type="match status" value="1"/>
</dbReference>
<dbReference type="Pfam" id="PF00675">
    <property type="entry name" value="Peptidase_M16"/>
    <property type="match status" value="1"/>
</dbReference>
<dbReference type="Pfam" id="PF05193">
    <property type="entry name" value="Peptidase_M16_C"/>
    <property type="match status" value="1"/>
</dbReference>
<dbReference type="Pfam" id="PF16187">
    <property type="entry name" value="Peptidase_M16_M"/>
    <property type="match status" value="1"/>
</dbReference>
<dbReference type="Pfam" id="PF22456">
    <property type="entry name" value="PqqF-like_C_4"/>
    <property type="match status" value="1"/>
</dbReference>
<dbReference type="SUPFAM" id="SSF63411">
    <property type="entry name" value="LuxS/MPP-like metallohydrolase"/>
    <property type="match status" value="4"/>
</dbReference>
<dbReference type="PROSITE" id="PS00143">
    <property type="entry name" value="INSULINASE"/>
    <property type="match status" value="1"/>
</dbReference>
<sequence>MVANEQQQQQQEEERKEVKLIQSPNDNNKYRYVKLKNGLEVVLVSDETTDQSSCCLSINIGSLCNPREIEGLAHFLEHMLFLGTEKFPVEKEFVNFIYLNGGSYNGTTSPNKTNYYFTVNQESFEEALDRFSSFFISPLMNEDAVNRELNAVDSEHNNNMQKDFWRMDRIVNDQFEGHPMSMFFTGDSSTLKRDDIREKVVEFYQRYYSANLMKVCIFGRESLDQLEEYANKYFLPIVNKDVKVPKLPPLAITSKSIMIEAEPTQDMDLLKFVFPIPDEKLCFSKNYKNASASILSHILGHECQGSLFSVLFNKDYAFSLSISSNSFYENMNKIEIQIHLTKTGLENVDEVIALLFQSFEFDTPEYFFTEKKLLSEINWKSFQKSAPASTTQAITSNLFRVERPEETLKYNNFLEQFAPEKIKEIQSYLRPDNMICLFYSSTKFKGKTTEIEPHYKIKFNKRYIEQSDFDKWKSFPKNTNLFLPKENPFLPIDTTIKAPQDHSIHIPKEVYNNNGVKVYHSLDHRFNSPKARVNIRFELTSYGNNQSMVMWNLLKKSLKEVLNEKILYYLSVLDFSMKLQILTTHVELQCYCFNDIIFTALGKVFDFLMNLDLNDMQFKRIKEKVAKRFLSSHYLSPYQISMRHLSLHNFNCNSMLLDKQEYLKKVTKSEFLNYFKSLFSYINFSAMVVGNASIEDACAFGEKLNSFSNRNSACPGEVFKLARVNLPSNTITHQREFLYDTNQTNCSSSISFLIGQFNRKTYATTLVICSILGSAYFEELRTKKQFGYVVNCAQDCTGNAISMRCIVQSHTKTPEEIFDATMEFFVGFEKTLDYFKTSPSDFKDLIENCQKQNTVKQQSNSAQSSLYWSFFTFCGDFEFEKKKYEDIGKITFDDVKQYYLDHLSPNTANLRIFAAHCYPQSYQIPDEVKPFGNVKVNLLRKYEHDNFKENHGYLSSKVNLQK</sequence>
<accession>Q54JQ2</accession>
<proteinExistence type="inferred from homology"/>
<gene>
    <name type="ORF">DDB_G0287851</name>
</gene>
<keyword id="KW-0963">Cytoplasm</keyword>
<keyword id="KW-0378">Hydrolase</keyword>
<keyword id="KW-0479">Metal-binding</keyword>
<keyword id="KW-0482">Metalloprotease</keyword>
<keyword id="KW-0645">Protease</keyword>
<keyword id="KW-1185">Reference proteome</keyword>
<keyword id="KW-0862">Zinc</keyword>
<comment type="cofactor">
    <cofactor evidence="1">
        <name>Zn(2+)</name>
        <dbReference type="ChEBI" id="CHEBI:29105"/>
    </cofactor>
    <text evidence="1">Binds 1 zinc ion per subunit.</text>
</comment>
<comment type="subunit">
    <text evidence="4">Homodimer.</text>
</comment>
<comment type="subcellular location">
    <subcellularLocation>
        <location evidence="1">Cytoplasm</location>
    </subcellularLocation>
</comment>
<comment type="similarity">
    <text evidence="4">Belongs to the peptidase M16 family.</text>
</comment>
<reference key="1">
    <citation type="journal article" date="2005" name="Nature">
        <title>The genome of the social amoeba Dictyostelium discoideum.</title>
        <authorList>
            <person name="Eichinger L."/>
            <person name="Pachebat J.A."/>
            <person name="Gloeckner G."/>
            <person name="Rajandream M.A."/>
            <person name="Sucgang R."/>
            <person name="Berriman M."/>
            <person name="Song J."/>
            <person name="Olsen R."/>
            <person name="Szafranski K."/>
            <person name="Xu Q."/>
            <person name="Tunggal B."/>
            <person name="Kummerfeld S."/>
            <person name="Madera M."/>
            <person name="Konfortov B.A."/>
            <person name="Rivero F."/>
            <person name="Bankier A.T."/>
            <person name="Lehmann R."/>
            <person name="Hamlin N."/>
            <person name="Davies R."/>
            <person name="Gaudet P."/>
            <person name="Fey P."/>
            <person name="Pilcher K."/>
            <person name="Chen G."/>
            <person name="Saunders D."/>
            <person name="Sodergren E.J."/>
            <person name="Davis P."/>
            <person name="Kerhornou A."/>
            <person name="Nie X."/>
            <person name="Hall N."/>
            <person name="Anjard C."/>
            <person name="Hemphill L."/>
            <person name="Bason N."/>
            <person name="Farbrother P."/>
            <person name="Desany B."/>
            <person name="Just E."/>
            <person name="Morio T."/>
            <person name="Rost R."/>
            <person name="Churcher C.M."/>
            <person name="Cooper J."/>
            <person name="Haydock S."/>
            <person name="van Driessche N."/>
            <person name="Cronin A."/>
            <person name="Goodhead I."/>
            <person name="Muzny D.M."/>
            <person name="Mourier T."/>
            <person name="Pain A."/>
            <person name="Lu M."/>
            <person name="Harper D."/>
            <person name="Lindsay R."/>
            <person name="Hauser H."/>
            <person name="James K.D."/>
            <person name="Quiles M."/>
            <person name="Madan Babu M."/>
            <person name="Saito T."/>
            <person name="Buchrieser C."/>
            <person name="Wardroper A."/>
            <person name="Felder M."/>
            <person name="Thangavelu M."/>
            <person name="Johnson D."/>
            <person name="Knights A."/>
            <person name="Loulseged H."/>
            <person name="Mungall K.L."/>
            <person name="Oliver K."/>
            <person name="Price C."/>
            <person name="Quail M.A."/>
            <person name="Urushihara H."/>
            <person name="Hernandez J."/>
            <person name="Rabbinowitsch E."/>
            <person name="Steffen D."/>
            <person name="Sanders M."/>
            <person name="Ma J."/>
            <person name="Kohara Y."/>
            <person name="Sharp S."/>
            <person name="Simmonds M.N."/>
            <person name="Spiegler S."/>
            <person name="Tivey A."/>
            <person name="Sugano S."/>
            <person name="White B."/>
            <person name="Walker D."/>
            <person name="Woodward J.R."/>
            <person name="Winckler T."/>
            <person name="Tanaka Y."/>
            <person name="Shaulsky G."/>
            <person name="Schleicher M."/>
            <person name="Weinstock G.M."/>
            <person name="Rosenthal A."/>
            <person name="Cox E.C."/>
            <person name="Chisholm R.L."/>
            <person name="Gibbs R.A."/>
            <person name="Loomis W.F."/>
            <person name="Platzer M."/>
            <person name="Kay R.R."/>
            <person name="Williams J.G."/>
            <person name="Dear P.H."/>
            <person name="Noegel A.A."/>
            <person name="Barrell B.G."/>
            <person name="Kuspa A."/>
        </authorList>
    </citation>
    <scope>NUCLEOTIDE SEQUENCE [LARGE SCALE GENOMIC DNA]</scope>
    <source>
        <strain>AX4</strain>
    </source>
</reference>
<organism>
    <name type="scientific">Dictyostelium discoideum</name>
    <name type="common">Social amoeba</name>
    <dbReference type="NCBI Taxonomy" id="44689"/>
    <lineage>
        <taxon>Eukaryota</taxon>
        <taxon>Amoebozoa</taxon>
        <taxon>Evosea</taxon>
        <taxon>Eumycetozoa</taxon>
        <taxon>Dictyostelia</taxon>
        <taxon>Dictyosteliales</taxon>
        <taxon>Dictyosteliaceae</taxon>
        <taxon>Dictyostelium</taxon>
    </lineage>
</organism>
<name>IDE_DICDI</name>